<dbReference type="EC" id="7.1.2.2" evidence="2"/>
<dbReference type="EMBL" id="AL939123">
    <property type="protein sequence ID" value="CAB94544.1"/>
    <property type="molecule type" value="Genomic_DNA"/>
</dbReference>
<dbReference type="RefSeq" id="NP_629512.1">
    <property type="nucleotide sequence ID" value="NC_003888.3"/>
</dbReference>
<dbReference type="RefSeq" id="WP_003973624.1">
    <property type="nucleotide sequence ID" value="NZ_VNID01000011.1"/>
</dbReference>
<dbReference type="SMR" id="P0A300"/>
<dbReference type="FunCoup" id="P0A300">
    <property type="interactions" value="311"/>
</dbReference>
<dbReference type="STRING" id="100226.gene:17763025"/>
<dbReference type="PaxDb" id="100226-SCO5373"/>
<dbReference type="GeneID" id="91383661"/>
<dbReference type="KEGG" id="sco:SCO5373"/>
<dbReference type="PATRIC" id="fig|100226.15.peg.5453"/>
<dbReference type="eggNOG" id="COG0055">
    <property type="taxonomic scope" value="Bacteria"/>
</dbReference>
<dbReference type="HOGENOM" id="CLU_022398_0_2_11"/>
<dbReference type="InParanoid" id="P0A300"/>
<dbReference type="OrthoDB" id="9801639at2"/>
<dbReference type="PhylomeDB" id="P0A300"/>
<dbReference type="Proteomes" id="UP000001973">
    <property type="component" value="Chromosome"/>
</dbReference>
<dbReference type="GO" id="GO:0005886">
    <property type="term" value="C:plasma membrane"/>
    <property type="evidence" value="ECO:0007669"/>
    <property type="project" value="UniProtKB-SubCell"/>
</dbReference>
<dbReference type="GO" id="GO:0045259">
    <property type="term" value="C:proton-transporting ATP synthase complex"/>
    <property type="evidence" value="ECO:0007669"/>
    <property type="project" value="UniProtKB-KW"/>
</dbReference>
<dbReference type="GO" id="GO:0005524">
    <property type="term" value="F:ATP binding"/>
    <property type="evidence" value="ECO:0007669"/>
    <property type="project" value="UniProtKB-UniRule"/>
</dbReference>
<dbReference type="GO" id="GO:0016887">
    <property type="term" value="F:ATP hydrolysis activity"/>
    <property type="evidence" value="ECO:0007669"/>
    <property type="project" value="InterPro"/>
</dbReference>
<dbReference type="GO" id="GO:0046933">
    <property type="term" value="F:proton-transporting ATP synthase activity, rotational mechanism"/>
    <property type="evidence" value="ECO:0007669"/>
    <property type="project" value="UniProtKB-UniRule"/>
</dbReference>
<dbReference type="CDD" id="cd18110">
    <property type="entry name" value="ATP-synt_F1_beta_C"/>
    <property type="match status" value="1"/>
</dbReference>
<dbReference type="CDD" id="cd18115">
    <property type="entry name" value="ATP-synt_F1_beta_N"/>
    <property type="match status" value="1"/>
</dbReference>
<dbReference type="CDD" id="cd01133">
    <property type="entry name" value="F1-ATPase_beta_CD"/>
    <property type="match status" value="1"/>
</dbReference>
<dbReference type="FunFam" id="1.10.1140.10:FF:000001">
    <property type="entry name" value="ATP synthase subunit beta"/>
    <property type="match status" value="1"/>
</dbReference>
<dbReference type="FunFam" id="2.40.10.170:FF:000005">
    <property type="entry name" value="ATP synthase subunit beta"/>
    <property type="match status" value="1"/>
</dbReference>
<dbReference type="FunFam" id="3.40.50.300:FF:000004">
    <property type="entry name" value="ATP synthase subunit beta"/>
    <property type="match status" value="1"/>
</dbReference>
<dbReference type="Gene3D" id="2.40.10.170">
    <property type="match status" value="1"/>
</dbReference>
<dbReference type="Gene3D" id="1.10.1140.10">
    <property type="entry name" value="Bovine Mitochondrial F1-atpase, Atp Synthase Beta Chain, Chain D, domain 3"/>
    <property type="match status" value="1"/>
</dbReference>
<dbReference type="Gene3D" id="3.40.50.300">
    <property type="entry name" value="P-loop containing nucleotide triphosphate hydrolases"/>
    <property type="match status" value="1"/>
</dbReference>
<dbReference type="HAMAP" id="MF_01347">
    <property type="entry name" value="ATP_synth_beta_bact"/>
    <property type="match status" value="1"/>
</dbReference>
<dbReference type="InterPro" id="IPR003593">
    <property type="entry name" value="AAA+_ATPase"/>
</dbReference>
<dbReference type="InterPro" id="IPR055190">
    <property type="entry name" value="ATP-synt_VA_C"/>
</dbReference>
<dbReference type="InterPro" id="IPR005722">
    <property type="entry name" value="ATP_synth_F1_bsu"/>
</dbReference>
<dbReference type="InterPro" id="IPR020003">
    <property type="entry name" value="ATPase_a/bsu_AS"/>
</dbReference>
<dbReference type="InterPro" id="IPR050053">
    <property type="entry name" value="ATPase_alpha/beta_chains"/>
</dbReference>
<dbReference type="InterPro" id="IPR004100">
    <property type="entry name" value="ATPase_F1/V1/A1_a/bsu_N"/>
</dbReference>
<dbReference type="InterPro" id="IPR036121">
    <property type="entry name" value="ATPase_F1/V1/A1_a/bsu_N_sf"/>
</dbReference>
<dbReference type="InterPro" id="IPR000194">
    <property type="entry name" value="ATPase_F1/V1/A1_a/bsu_nucl-bd"/>
</dbReference>
<dbReference type="InterPro" id="IPR024034">
    <property type="entry name" value="ATPase_F1/V1_b/a_C"/>
</dbReference>
<dbReference type="InterPro" id="IPR027417">
    <property type="entry name" value="P-loop_NTPase"/>
</dbReference>
<dbReference type="NCBIfam" id="TIGR01039">
    <property type="entry name" value="atpD"/>
    <property type="match status" value="1"/>
</dbReference>
<dbReference type="PANTHER" id="PTHR15184">
    <property type="entry name" value="ATP SYNTHASE"/>
    <property type="match status" value="1"/>
</dbReference>
<dbReference type="PANTHER" id="PTHR15184:SF71">
    <property type="entry name" value="ATP SYNTHASE SUBUNIT BETA, MITOCHONDRIAL"/>
    <property type="match status" value="1"/>
</dbReference>
<dbReference type="Pfam" id="PF00006">
    <property type="entry name" value="ATP-synt_ab"/>
    <property type="match status" value="1"/>
</dbReference>
<dbReference type="Pfam" id="PF02874">
    <property type="entry name" value="ATP-synt_ab_N"/>
    <property type="match status" value="1"/>
</dbReference>
<dbReference type="Pfam" id="PF22919">
    <property type="entry name" value="ATP-synt_VA_C"/>
    <property type="match status" value="1"/>
</dbReference>
<dbReference type="SMART" id="SM00382">
    <property type="entry name" value="AAA"/>
    <property type="match status" value="1"/>
</dbReference>
<dbReference type="SUPFAM" id="SSF47917">
    <property type="entry name" value="C-terminal domain of alpha and beta subunits of F1 ATP synthase"/>
    <property type="match status" value="1"/>
</dbReference>
<dbReference type="SUPFAM" id="SSF50615">
    <property type="entry name" value="N-terminal domain of alpha and beta subunits of F1 ATP synthase"/>
    <property type="match status" value="1"/>
</dbReference>
<dbReference type="SUPFAM" id="SSF52540">
    <property type="entry name" value="P-loop containing nucleoside triphosphate hydrolases"/>
    <property type="match status" value="1"/>
</dbReference>
<dbReference type="PROSITE" id="PS00152">
    <property type="entry name" value="ATPASE_ALPHA_BETA"/>
    <property type="match status" value="1"/>
</dbReference>
<feature type="initiator methionine" description="Removed" evidence="1">
    <location>
        <position position="1"/>
    </location>
</feature>
<feature type="chain" id="PRO_0000144478" description="ATP synthase subunit beta">
    <location>
        <begin position="2"/>
        <end position="478"/>
    </location>
</feature>
<feature type="binding site" evidence="2">
    <location>
        <begin position="164"/>
        <end position="171"/>
    </location>
    <ligand>
        <name>ATP</name>
        <dbReference type="ChEBI" id="CHEBI:30616"/>
    </ligand>
</feature>
<proteinExistence type="inferred from homology"/>
<reference key="1">
    <citation type="journal article" date="2002" name="Nature">
        <title>Complete genome sequence of the model actinomycete Streptomyces coelicolor A3(2).</title>
        <authorList>
            <person name="Bentley S.D."/>
            <person name="Chater K.F."/>
            <person name="Cerdeno-Tarraga A.-M."/>
            <person name="Challis G.L."/>
            <person name="Thomson N.R."/>
            <person name="James K.D."/>
            <person name="Harris D.E."/>
            <person name="Quail M.A."/>
            <person name="Kieser H."/>
            <person name="Harper D."/>
            <person name="Bateman A."/>
            <person name="Brown S."/>
            <person name="Chandra G."/>
            <person name="Chen C.W."/>
            <person name="Collins M."/>
            <person name="Cronin A."/>
            <person name="Fraser A."/>
            <person name="Goble A."/>
            <person name="Hidalgo J."/>
            <person name="Hornsby T."/>
            <person name="Howarth S."/>
            <person name="Huang C.-H."/>
            <person name="Kieser T."/>
            <person name="Larke L."/>
            <person name="Murphy L.D."/>
            <person name="Oliver K."/>
            <person name="O'Neil S."/>
            <person name="Rabbinowitsch E."/>
            <person name="Rajandream M.A."/>
            <person name="Rutherford K.M."/>
            <person name="Rutter S."/>
            <person name="Seeger K."/>
            <person name="Saunders D."/>
            <person name="Sharp S."/>
            <person name="Squares R."/>
            <person name="Squares S."/>
            <person name="Taylor K."/>
            <person name="Warren T."/>
            <person name="Wietzorrek A."/>
            <person name="Woodward J.R."/>
            <person name="Barrell B.G."/>
            <person name="Parkhill J."/>
            <person name="Hopwood D.A."/>
        </authorList>
    </citation>
    <scope>NUCLEOTIDE SEQUENCE [LARGE SCALE GENOMIC DNA]</scope>
    <source>
        <strain>ATCC BAA-471 / A3(2) / M145</strain>
    </source>
</reference>
<name>ATPB_STRCO</name>
<sequence length="478" mass="52178">MTTTVETATATGRVARVIGPVVDVEFPVDAMPEIYNALHVEVADPAKEGELKTLTLEVAQHLGDGLVRTISMQPTDGLIRQAPVTDTGAAISVPVGDFTKGKVFNTLGEVLNVDEQYTGERWPIHRKAPNFDELESKTEMFETGVKVIDLLTPYVKGGKIGLFGGAGVGKTVLIQEMIYRVANNHDGVSVFAGVGERTREGNDLIDEMSESGVIDKTALVFGQMDEPPGTRLRVALAGLTMAEYFRDVQKQDVLFFIDNIFRFTQAGSEVSTLLGRMPSAVGYQPNLADEMGLLQERITSTRGHSITSMQAIYVPADDLTDPAPATTFAHLDATTVLSRPISEKGIYPAVDPLDSTSRILDPRYIAAEHYNAAMRVKNILQKYKDLQDIIAILGIDELGEEDKLVVHRARRVERFLSQNTHVAKQFTGVDGSDVPLDESIAAFNAICDGEYDHFPEQAFFMCGGIEDLKNNAKELGVS</sequence>
<protein>
    <recommendedName>
        <fullName evidence="2">ATP synthase subunit beta</fullName>
        <ecNumber evidence="2">7.1.2.2</ecNumber>
    </recommendedName>
    <alternativeName>
        <fullName evidence="2">ATP synthase F1 sector subunit beta</fullName>
    </alternativeName>
    <alternativeName>
        <fullName evidence="2">F-ATPase subunit beta</fullName>
    </alternativeName>
</protein>
<accession>P0A300</accession>
<accession>P50004</accession>
<comment type="function">
    <text evidence="2">Produces ATP from ADP in the presence of a proton gradient across the membrane. The catalytic sites are hosted primarily by the beta subunits.</text>
</comment>
<comment type="catalytic activity">
    <reaction evidence="2">
        <text>ATP + H2O + 4 H(+)(in) = ADP + phosphate + 5 H(+)(out)</text>
        <dbReference type="Rhea" id="RHEA:57720"/>
        <dbReference type="ChEBI" id="CHEBI:15377"/>
        <dbReference type="ChEBI" id="CHEBI:15378"/>
        <dbReference type="ChEBI" id="CHEBI:30616"/>
        <dbReference type="ChEBI" id="CHEBI:43474"/>
        <dbReference type="ChEBI" id="CHEBI:456216"/>
        <dbReference type="EC" id="7.1.2.2"/>
    </reaction>
</comment>
<comment type="subunit">
    <text evidence="2">F-type ATPases have 2 components, CF(1) - the catalytic core - and CF(0) - the membrane proton channel. CF(1) has five subunits: alpha(3), beta(3), gamma(1), delta(1), epsilon(1). CF(0) has three main subunits: a(1), b(2) and c(9-12). The alpha and beta chains form an alternating ring which encloses part of the gamma chain. CF(1) is attached to CF(0) by a central stalk formed by the gamma and epsilon chains, while a peripheral stalk is formed by the delta and b chains.</text>
</comment>
<comment type="subcellular location">
    <subcellularLocation>
        <location evidence="2">Cell membrane</location>
        <topology evidence="2">Peripheral membrane protein</topology>
    </subcellularLocation>
</comment>
<comment type="similarity">
    <text evidence="2">Belongs to the ATPase alpha/beta chains family.</text>
</comment>
<gene>
    <name evidence="2" type="primary">atpD</name>
    <name type="ordered locus">SCO5373</name>
    <name type="ORF">2SC6G5.17</name>
</gene>
<organism>
    <name type="scientific">Streptomyces coelicolor (strain ATCC BAA-471 / A3(2) / M145)</name>
    <dbReference type="NCBI Taxonomy" id="100226"/>
    <lineage>
        <taxon>Bacteria</taxon>
        <taxon>Bacillati</taxon>
        <taxon>Actinomycetota</taxon>
        <taxon>Actinomycetes</taxon>
        <taxon>Kitasatosporales</taxon>
        <taxon>Streptomycetaceae</taxon>
        <taxon>Streptomyces</taxon>
        <taxon>Streptomyces albidoflavus group</taxon>
    </lineage>
</organism>
<evidence type="ECO:0000250" key="1"/>
<evidence type="ECO:0000255" key="2">
    <source>
        <dbReference type="HAMAP-Rule" id="MF_01347"/>
    </source>
</evidence>
<keyword id="KW-0066">ATP synthesis</keyword>
<keyword id="KW-0067">ATP-binding</keyword>
<keyword id="KW-1003">Cell membrane</keyword>
<keyword id="KW-0139">CF(1)</keyword>
<keyword id="KW-0375">Hydrogen ion transport</keyword>
<keyword id="KW-0406">Ion transport</keyword>
<keyword id="KW-0472">Membrane</keyword>
<keyword id="KW-0547">Nucleotide-binding</keyword>
<keyword id="KW-1185">Reference proteome</keyword>
<keyword id="KW-1278">Translocase</keyword>
<keyword id="KW-0813">Transport</keyword>